<protein>
    <recommendedName>
        <fullName evidence="1">Chaperonin GroEL</fullName>
        <ecNumber evidence="1">5.6.1.7</ecNumber>
    </recommendedName>
    <alternativeName>
        <fullName evidence="1">60 kDa chaperonin</fullName>
    </alternativeName>
    <alternativeName>
        <fullName evidence="1">Chaperonin-60</fullName>
        <shortName evidence="1">Cpn60</shortName>
    </alternativeName>
</protein>
<keyword id="KW-0067">ATP-binding</keyword>
<keyword id="KW-0143">Chaperone</keyword>
<keyword id="KW-0963">Cytoplasm</keyword>
<keyword id="KW-0413">Isomerase</keyword>
<keyword id="KW-0547">Nucleotide-binding</keyword>
<keyword id="KW-1185">Reference proteome</keyword>
<gene>
    <name evidence="1" type="primary">groEL</name>
    <name evidence="1" type="synonym">groL</name>
    <name type="ordered locus">Gmet_0029</name>
</gene>
<accession>Q39ZP5</accession>
<dbReference type="EC" id="5.6.1.7" evidence="1"/>
<dbReference type="EMBL" id="CP000148">
    <property type="protein sequence ID" value="ABB30279.1"/>
    <property type="molecule type" value="Genomic_DNA"/>
</dbReference>
<dbReference type="RefSeq" id="WP_004513795.1">
    <property type="nucleotide sequence ID" value="NC_007517.1"/>
</dbReference>
<dbReference type="SMR" id="Q39ZP5"/>
<dbReference type="STRING" id="269799.Gmet_0029"/>
<dbReference type="KEGG" id="gme:Gmet_0029"/>
<dbReference type="eggNOG" id="COG0459">
    <property type="taxonomic scope" value="Bacteria"/>
</dbReference>
<dbReference type="HOGENOM" id="CLU_016503_3_0_7"/>
<dbReference type="Proteomes" id="UP000007073">
    <property type="component" value="Chromosome"/>
</dbReference>
<dbReference type="GO" id="GO:0005737">
    <property type="term" value="C:cytoplasm"/>
    <property type="evidence" value="ECO:0007669"/>
    <property type="project" value="UniProtKB-SubCell"/>
</dbReference>
<dbReference type="GO" id="GO:0005524">
    <property type="term" value="F:ATP binding"/>
    <property type="evidence" value="ECO:0007669"/>
    <property type="project" value="UniProtKB-UniRule"/>
</dbReference>
<dbReference type="GO" id="GO:0140662">
    <property type="term" value="F:ATP-dependent protein folding chaperone"/>
    <property type="evidence" value="ECO:0007669"/>
    <property type="project" value="InterPro"/>
</dbReference>
<dbReference type="GO" id="GO:0016853">
    <property type="term" value="F:isomerase activity"/>
    <property type="evidence" value="ECO:0007669"/>
    <property type="project" value="UniProtKB-KW"/>
</dbReference>
<dbReference type="GO" id="GO:0051082">
    <property type="term" value="F:unfolded protein binding"/>
    <property type="evidence" value="ECO:0007669"/>
    <property type="project" value="UniProtKB-UniRule"/>
</dbReference>
<dbReference type="GO" id="GO:0042026">
    <property type="term" value="P:protein refolding"/>
    <property type="evidence" value="ECO:0007669"/>
    <property type="project" value="UniProtKB-UniRule"/>
</dbReference>
<dbReference type="CDD" id="cd03344">
    <property type="entry name" value="GroEL"/>
    <property type="match status" value="1"/>
</dbReference>
<dbReference type="FunFam" id="1.10.560.10:FF:000001">
    <property type="entry name" value="60 kDa chaperonin"/>
    <property type="match status" value="1"/>
</dbReference>
<dbReference type="FunFam" id="3.50.7.10:FF:000001">
    <property type="entry name" value="60 kDa chaperonin"/>
    <property type="match status" value="1"/>
</dbReference>
<dbReference type="Gene3D" id="3.50.7.10">
    <property type="entry name" value="GroEL"/>
    <property type="match status" value="1"/>
</dbReference>
<dbReference type="Gene3D" id="1.10.560.10">
    <property type="entry name" value="GroEL-like equatorial domain"/>
    <property type="match status" value="1"/>
</dbReference>
<dbReference type="Gene3D" id="3.30.260.10">
    <property type="entry name" value="TCP-1-like chaperonin intermediate domain"/>
    <property type="match status" value="1"/>
</dbReference>
<dbReference type="HAMAP" id="MF_00600">
    <property type="entry name" value="CH60"/>
    <property type="match status" value="1"/>
</dbReference>
<dbReference type="InterPro" id="IPR018370">
    <property type="entry name" value="Chaperonin_Cpn60_CS"/>
</dbReference>
<dbReference type="InterPro" id="IPR001844">
    <property type="entry name" value="Cpn60/GroEL"/>
</dbReference>
<dbReference type="InterPro" id="IPR002423">
    <property type="entry name" value="Cpn60/GroEL/TCP-1"/>
</dbReference>
<dbReference type="InterPro" id="IPR027409">
    <property type="entry name" value="GroEL-like_apical_dom_sf"/>
</dbReference>
<dbReference type="InterPro" id="IPR027413">
    <property type="entry name" value="GROEL-like_equatorial_sf"/>
</dbReference>
<dbReference type="InterPro" id="IPR027410">
    <property type="entry name" value="TCP-1-like_intermed_sf"/>
</dbReference>
<dbReference type="NCBIfam" id="TIGR02348">
    <property type="entry name" value="GroEL"/>
    <property type="match status" value="1"/>
</dbReference>
<dbReference type="NCBIfam" id="NF000592">
    <property type="entry name" value="PRK00013.1"/>
    <property type="match status" value="1"/>
</dbReference>
<dbReference type="NCBIfam" id="NF009487">
    <property type="entry name" value="PRK12849.1"/>
    <property type="match status" value="1"/>
</dbReference>
<dbReference type="NCBIfam" id="NF009488">
    <property type="entry name" value="PRK12850.1"/>
    <property type="match status" value="1"/>
</dbReference>
<dbReference type="NCBIfam" id="NF009489">
    <property type="entry name" value="PRK12851.1"/>
    <property type="match status" value="1"/>
</dbReference>
<dbReference type="PANTHER" id="PTHR45633">
    <property type="entry name" value="60 KDA HEAT SHOCK PROTEIN, MITOCHONDRIAL"/>
    <property type="match status" value="1"/>
</dbReference>
<dbReference type="Pfam" id="PF00118">
    <property type="entry name" value="Cpn60_TCP1"/>
    <property type="match status" value="1"/>
</dbReference>
<dbReference type="PRINTS" id="PR00298">
    <property type="entry name" value="CHAPERONIN60"/>
</dbReference>
<dbReference type="SUPFAM" id="SSF52029">
    <property type="entry name" value="GroEL apical domain-like"/>
    <property type="match status" value="1"/>
</dbReference>
<dbReference type="SUPFAM" id="SSF48592">
    <property type="entry name" value="GroEL equatorial domain-like"/>
    <property type="match status" value="1"/>
</dbReference>
<dbReference type="SUPFAM" id="SSF54849">
    <property type="entry name" value="GroEL-intermediate domain like"/>
    <property type="match status" value="1"/>
</dbReference>
<dbReference type="PROSITE" id="PS00296">
    <property type="entry name" value="CHAPERONINS_CPN60"/>
    <property type="match status" value="1"/>
</dbReference>
<proteinExistence type="inferred from homology"/>
<comment type="function">
    <text evidence="1">Together with its co-chaperonin GroES, plays an essential role in assisting protein folding. The GroEL-GroES system forms a nano-cage that allows encapsulation of the non-native substrate proteins and provides a physical environment optimized to promote and accelerate protein folding.</text>
</comment>
<comment type="catalytic activity">
    <reaction evidence="1">
        <text>ATP + H2O + a folded polypeptide = ADP + phosphate + an unfolded polypeptide.</text>
        <dbReference type="EC" id="5.6.1.7"/>
    </reaction>
</comment>
<comment type="subunit">
    <text evidence="1">Forms a cylinder of 14 subunits composed of two heptameric rings stacked back-to-back. Interacts with the co-chaperonin GroES.</text>
</comment>
<comment type="subcellular location">
    <subcellularLocation>
        <location evidence="1">Cytoplasm</location>
    </subcellularLocation>
</comment>
<comment type="similarity">
    <text evidence="1">Belongs to the chaperonin (HSP60) family.</text>
</comment>
<organism>
    <name type="scientific">Geobacter metallireducens (strain ATCC 53774 / DSM 7210 / GS-15)</name>
    <dbReference type="NCBI Taxonomy" id="269799"/>
    <lineage>
        <taxon>Bacteria</taxon>
        <taxon>Pseudomonadati</taxon>
        <taxon>Thermodesulfobacteriota</taxon>
        <taxon>Desulfuromonadia</taxon>
        <taxon>Geobacterales</taxon>
        <taxon>Geobacteraceae</taxon>
        <taxon>Geobacter</taxon>
    </lineage>
</organism>
<feature type="chain" id="PRO_0000256915" description="Chaperonin GroEL">
    <location>
        <begin position="1"/>
        <end position="546"/>
    </location>
</feature>
<feature type="binding site" evidence="1">
    <location>
        <begin position="29"/>
        <end position="32"/>
    </location>
    <ligand>
        <name>ATP</name>
        <dbReference type="ChEBI" id="CHEBI:30616"/>
    </ligand>
</feature>
<feature type="binding site" evidence="1">
    <location>
        <position position="50"/>
    </location>
    <ligand>
        <name>ATP</name>
        <dbReference type="ChEBI" id="CHEBI:30616"/>
    </ligand>
</feature>
<feature type="binding site" evidence="1">
    <location>
        <begin position="86"/>
        <end position="90"/>
    </location>
    <ligand>
        <name>ATP</name>
        <dbReference type="ChEBI" id="CHEBI:30616"/>
    </ligand>
</feature>
<feature type="binding site" evidence="1">
    <location>
        <position position="414"/>
    </location>
    <ligand>
        <name>ATP</name>
        <dbReference type="ChEBI" id="CHEBI:30616"/>
    </ligand>
</feature>
<feature type="binding site" evidence="1">
    <location>
        <begin position="477"/>
        <end position="479"/>
    </location>
    <ligand>
        <name>ATP</name>
        <dbReference type="ChEBI" id="CHEBI:30616"/>
    </ligand>
</feature>
<feature type="binding site" evidence="1">
    <location>
        <position position="493"/>
    </location>
    <ligand>
        <name>ATP</name>
        <dbReference type="ChEBI" id="CHEBI:30616"/>
    </ligand>
</feature>
<reference key="1">
    <citation type="journal article" date="2009" name="BMC Microbiol.">
        <title>The genome sequence of Geobacter metallireducens: features of metabolism, physiology and regulation common and dissimilar to Geobacter sulfurreducens.</title>
        <authorList>
            <person name="Aklujkar M."/>
            <person name="Krushkal J."/>
            <person name="DiBartolo G."/>
            <person name="Lapidus A."/>
            <person name="Land M.L."/>
            <person name="Lovley D.R."/>
        </authorList>
    </citation>
    <scope>NUCLEOTIDE SEQUENCE [LARGE SCALE GENOMIC DNA]</scope>
    <source>
        <strain>ATCC 53774 / DSM 7210 / GS-15</strain>
    </source>
</reference>
<name>CH60_GEOMG</name>
<sequence>MAKIIKFDQEGRNAILKGVNTLADAVKVTLGPKGRNVIIEKSFGSPLITKDGVTVAKEIELEDKFENMGAQLVKEVASKTSDVAGDGTTTATVLAQAIYRQGSKLVAAGHNPMEIKRGIDSAVETIVAELQKISKPIKDHKEIAQVGTISANNDKTIGGIIAEAMEKVGKEGVITVEEAKAMETSLETVEGMQFDRGYLSPYFVTDPERMEASLENANILIHDKKISNMKDLLPILEQTAKSGRPLLIIAEDIEGEALATLVVNKLRGVLNICAVKAPGFGDRRKAMLEDIAVLTGGKVISEELGFKLENATFDMLGTAKRVTIDKDNTTIIDGDGSEADIQGRVKQIRAQIEETSSDYDREKLQERLAKLVGGVAVIKVGAATETEMKEKKARVEDALHATRAAVDEGIVPGGGVAYIRSLGALEGISLPAEQQFGVTLIKRALEEPIRQIAQNAGVDGSIVVDKVKNGKDAFGFNAADDEYVDMIAAGIIDPTKVSRSALQNAASVAGLMLTTEAMIADKPKEEAAMPAMPGGMGGMGGMGGMM</sequence>
<evidence type="ECO:0000255" key="1">
    <source>
        <dbReference type="HAMAP-Rule" id="MF_00600"/>
    </source>
</evidence>